<organism>
    <name type="scientific">Ceratitis capitata</name>
    <name type="common">Mediterranean fruit fly</name>
    <name type="synonym">Tephritis capitata</name>
    <dbReference type="NCBI Taxonomy" id="7213"/>
    <lineage>
        <taxon>Eukaryota</taxon>
        <taxon>Metazoa</taxon>
        <taxon>Ecdysozoa</taxon>
        <taxon>Arthropoda</taxon>
        <taxon>Hexapoda</taxon>
        <taxon>Insecta</taxon>
        <taxon>Pterygota</taxon>
        <taxon>Neoptera</taxon>
        <taxon>Endopterygota</taxon>
        <taxon>Diptera</taxon>
        <taxon>Brachycera</taxon>
        <taxon>Muscomorpha</taxon>
        <taxon>Tephritoidea</taxon>
        <taxon>Tephritidae</taxon>
        <taxon>Ceratitis</taxon>
        <taxon>Ceratitis</taxon>
    </lineage>
</organism>
<accession>Q17313</accession>
<keyword id="KW-0044">Antibiotic</keyword>
<keyword id="KW-0929">Antimicrobial</keyword>
<keyword id="KW-0165">Cleavage on pair of basic residues</keyword>
<keyword id="KW-0204">Cytolysis</keyword>
<keyword id="KW-0354">Hemolysis</keyword>
<keyword id="KW-0391">Immunity</keyword>
<keyword id="KW-0399">Innate immunity</keyword>
<keyword id="KW-0964">Secreted</keyword>
<keyword id="KW-0732">Signal</keyword>
<comment type="function">
    <text>Female-specific peptides with potent activity against Gram-positive and Gram-negative bacteria. They have as well hemolytic activity.</text>
</comment>
<comment type="biophysicochemical properties">
    <temperatureDependence>
        <text>Thermostable. Still active at 100 degrees Celsius.</text>
    </temperatureDependence>
</comment>
<comment type="subunit">
    <text evidence="1">Homomer of four to six subunits.</text>
</comment>
<comment type="subcellular location">
    <subcellularLocation>
        <location evidence="1">Secreted</location>
    </subcellularLocation>
</comment>
<reference key="1">
    <citation type="journal article" date="1996" name="Eur. J. Biochem.">
        <title>Molecular characterization of ceratotoxin C, a novel antibacterial female-specific peptide of the ceratotoxin family from the medfly Ceratitis capitata.</title>
        <authorList>
            <person name="Rosetto M."/>
            <person name="Manetti A.G.O."/>
            <person name="Giordano P.C."/>
            <person name="Marri L."/>
            <person name="Amons R."/>
            <person name="Baldari C.T."/>
            <person name="Marchini D."/>
            <person name="Dallai R."/>
        </authorList>
    </citation>
    <scope>NUCLEOTIDE SEQUENCE [MRNA]</scope>
    <source>
        <tissue>Female accessory gland</tissue>
    </source>
</reference>
<reference key="2">
    <citation type="journal article" date="1997" name="Insect Biochem. Mol. Biol.">
        <title>The genes encoding the antibacterial sex-specific peptides ceratotoxins are clustered in the genome of the medfly Ceratitis capitata.</title>
        <authorList>
            <person name="Rosetto M."/>
            <person name="de Filippis T."/>
            <person name="Manetti A.G.O."/>
            <person name="Marchini D."/>
            <person name="Baldari C.T."/>
            <person name="Dallai R."/>
        </authorList>
    </citation>
    <scope>NUCLEOTIDE SEQUENCE [GENOMIC DNA]</scope>
    <source>
        <tissue>Female accessory gland</tissue>
    </source>
</reference>
<gene>
    <name type="primary">CTXC1</name>
</gene>
<gene>
    <name type="primary">CTCX2</name>
</gene>
<protein>
    <recommendedName>
        <fullName>Ceratotoxin-C</fullName>
    </recommendedName>
</protein>
<proteinExistence type="evidence at protein level"/>
<sequence length="67" mass="6828">MANIKAVFLICIVAFIAFHCVVAEPTAEDSVVVKRSLGGVISGAKKVAKVAIPIGKAVLPVVAKLVG</sequence>
<dbReference type="EMBL" id="L76300">
    <property type="protein sequence ID" value="AAA89172.1"/>
    <property type="molecule type" value="mRNA"/>
</dbReference>
<dbReference type="EMBL" id="Y15374">
    <property type="protein sequence ID" value="CAA75596.1"/>
    <property type="molecule type" value="Genomic_DNA"/>
</dbReference>
<dbReference type="EMBL" id="Y15375">
    <property type="protein sequence ID" value="CAA75597.1"/>
    <property type="molecule type" value="Genomic_DNA"/>
</dbReference>
<dbReference type="SMR" id="Q17313"/>
<dbReference type="EnsemblMetazoa" id="XM_004523288.3">
    <property type="protein sequence ID" value="XP_004523345.1"/>
    <property type="gene ID" value="LOC101462561"/>
</dbReference>
<dbReference type="EnsemblMetazoa" id="XM_004523289.3">
    <property type="protein sequence ID" value="XP_004523346.1"/>
    <property type="gene ID" value="LOC101463108"/>
</dbReference>
<dbReference type="KEGG" id="ccat:101462561"/>
<dbReference type="KEGG" id="ccat:101463108"/>
<dbReference type="GO" id="GO:0005576">
    <property type="term" value="C:extracellular region"/>
    <property type="evidence" value="ECO:0007669"/>
    <property type="project" value="UniProtKB-SubCell"/>
</dbReference>
<dbReference type="GO" id="GO:0042742">
    <property type="term" value="P:defense response to bacterium"/>
    <property type="evidence" value="ECO:0007669"/>
    <property type="project" value="UniProtKB-KW"/>
</dbReference>
<dbReference type="GO" id="GO:0045087">
    <property type="term" value="P:innate immune response"/>
    <property type="evidence" value="ECO:0007669"/>
    <property type="project" value="UniProtKB-KW"/>
</dbReference>
<dbReference type="GO" id="GO:0031640">
    <property type="term" value="P:killing of cells of another organism"/>
    <property type="evidence" value="ECO:0007669"/>
    <property type="project" value="UniProtKB-KW"/>
</dbReference>
<name>CTXC1_CERCA</name>
<evidence type="ECO:0000250" key="1"/>
<evidence type="ECO:0000255" key="2"/>
<feature type="signal peptide" evidence="2">
    <location>
        <begin position="1"/>
        <end position="23"/>
    </location>
</feature>
<feature type="propeptide" id="PRO_0000004970" evidence="1">
    <location>
        <begin position="24"/>
        <end position="35"/>
    </location>
</feature>
<feature type="peptide" id="PRO_0000004971" description="Ceratotoxin-C">
    <location>
        <begin position="36"/>
        <end position="67"/>
    </location>
</feature>